<proteinExistence type="evidence at transcript level"/>
<organism>
    <name type="scientific">Drosophila melanogaster</name>
    <name type="common">Fruit fly</name>
    <dbReference type="NCBI Taxonomy" id="7227"/>
    <lineage>
        <taxon>Eukaryota</taxon>
        <taxon>Metazoa</taxon>
        <taxon>Ecdysozoa</taxon>
        <taxon>Arthropoda</taxon>
        <taxon>Hexapoda</taxon>
        <taxon>Insecta</taxon>
        <taxon>Pterygota</taxon>
        <taxon>Neoptera</taxon>
        <taxon>Endopterygota</taxon>
        <taxon>Diptera</taxon>
        <taxon>Brachycera</taxon>
        <taxon>Muscomorpha</taxon>
        <taxon>Ephydroidea</taxon>
        <taxon>Drosophilidae</taxon>
        <taxon>Drosophila</taxon>
        <taxon>Sophophora</taxon>
    </lineage>
</organism>
<comment type="function">
    <text>eIF-2 functions in the early steps of protein synthesis by forming a ternary complex with GTP and initiator tRNA. This pre-initiation complex mediates ribosomal recognition of a start codon during the scanning process of the leader region.</text>
</comment>
<comment type="subunit">
    <text evidence="2">Eukaryotic translation initiation factor 2 eIF2 is a heterotrimeric complex composed of an alpha, a beta and a gamma subunit.</text>
</comment>
<comment type="subcellular location">
    <subcellularLocation>
        <location evidence="3">Cytoplasm</location>
        <location evidence="3">Cytosol</location>
    </subcellularLocation>
</comment>
<comment type="PTM">
    <text>Phosphorylation of eIF-2-alpha impairs the recycling of eIF-2 between successive rounds of initiation and thus leads to inhibition of translation.</text>
</comment>
<comment type="similarity">
    <text evidence="6">Belongs to the eIF-2-alpha family.</text>
</comment>
<gene>
    <name evidence="7" type="primary">eIF2alpha</name>
    <name evidence="7" type="synonym">eIF2-alpha</name>
    <name evidence="7" type="synonym">eIF2a</name>
    <name evidence="7" type="ORF">CG9946</name>
</gene>
<dbReference type="EMBL" id="L19196">
    <property type="protein sequence ID" value="AAA53627.1"/>
    <property type="molecule type" value="mRNA"/>
</dbReference>
<dbReference type="EMBL" id="AE014298">
    <property type="protein sequence ID" value="AAF48615.1"/>
    <property type="molecule type" value="Genomic_DNA"/>
</dbReference>
<dbReference type="EMBL" id="AF145633">
    <property type="protein sequence ID" value="AAD38608.1"/>
    <property type="molecule type" value="mRNA"/>
</dbReference>
<dbReference type="RefSeq" id="NP_001285329.1">
    <property type="nucleotide sequence ID" value="NM_001298400.1"/>
</dbReference>
<dbReference type="RefSeq" id="NP_573130.1">
    <property type="nucleotide sequence ID" value="NM_132902.4"/>
</dbReference>
<dbReference type="SMR" id="P41374"/>
<dbReference type="BioGRID" id="58956">
    <property type="interactions" value="20"/>
</dbReference>
<dbReference type="DIP" id="DIP-23926N"/>
<dbReference type="FunCoup" id="P41374">
    <property type="interactions" value="2263"/>
</dbReference>
<dbReference type="IntAct" id="P41374">
    <property type="interactions" value="3"/>
</dbReference>
<dbReference type="STRING" id="7227.FBpp0309768"/>
<dbReference type="iPTMnet" id="P41374"/>
<dbReference type="PaxDb" id="7227-FBpp0074075"/>
<dbReference type="ABCD" id="P41374">
    <property type="antibodies" value="2 sequenced antibodies"/>
</dbReference>
<dbReference type="DNASU" id="32617"/>
<dbReference type="EnsemblMetazoa" id="FBtr0074300">
    <property type="protein sequence ID" value="FBpp0074075"/>
    <property type="gene ID" value="FBgn0261609"/>
</dbReference>
<dbReference type="EnsemblMetazoa" id="FBtr0343016">
    <property type="protein sequence ID" value="FBpp0309768"/>
    <property type="gene ID" value="FBgn0261609"/>
</dbReference>
<dbReference type="GeneID" id="32617"/>
<dbReference type="KEGG" id="dme:Dmel_CG9946"/>
<dbReference type="AGR" id="FB:FBgn0290109"/>
<dbReference type="CTD" id="32617"/>
<dbReference type="FlyBase" id="FBgn0290109">
    <property type="gene designation" value="eIF2alpha"/>
</dbReference>
<dbReference type="VEuPathDB" id="VectorBase:FBgn0261609"/>
<dbReference type="eggNOG" id="KOG2916">
    <property type="taxonomic scope" value="Eukaryota"/>
</dbReference>
<dbReference type="HOGENOM" id="CLU_033458_0_0_1"/>
<dbReference type="InParanoid" id="P41374"/>
<dbReference type="OMA" id="DVNEHQR"/>
<dbReference type="OrthoDB" id="1685042at2759"/>
<dbReference type="PhylomeDB" id="P41374"/>
<dbReference type="Reactome" id="R-DME-156827">
    <property type="pathway name" value="L13a-mediated translational silencing of Ceruloplasmin expression"/>
</dbReference>
<dbReference type="Reactome" id="R-DME-381042">
    <property type="pathway name" value="PERK regulates gene expression"/>
</dbReference>
<dbReference type="Reactome" id="R-DME-382556">
    <property type="pathway name" value="ABC-family proteins mediated transport"/>
</dbReference>
<dbReference type="Reactome" id="R-DME-72649">
    <property type="pathway name" value="Translation initiation complex formation"/>
</dbReference>
<dbReference type="Reactome" id="R-DME-72695">
    <property type="pathway name" value="Formation of the ternary complex, and subsequently, the 43S complex"/>
</dbReference>
<dbReference type="Reactome" id="R-DME-72702">
    <property type="pathway name" value="Ribosomal scanning and start codon recognition"/>
</dbReference>
<dbReference type="Reactome" id="R-DME-72731">
    <property type="pathway name" value="Recycling of eIF2:GDP"/>
</dbReference>
<dbReference type="Reactome" id="R-DME-9840373">
    <property type="pathway name" value="Cellular response to mitochondrial stress"/>
</dbReference>
<dbReference type="SignaLink" id="P41374"/>
<dbReference type="BioGRID-ORCS" id="32617">
    <property type="hits" value="1 hit in 1 CRISPR screen"/>
</dbReference>
<dbReference type="GenomeRNAi" id="32617"/>
<dbReference type="PRO" id="PR:P41374"/>
<dbReference type="Proteomes" id="UP000000803">
    <property type="component" value="Chromosome X"/>
</dbReference>
<dbReference type="Bgee" id="FBgn0261609">
    <property type="expression patterns" value="Expressed in adult enteroendocrine precursor cell in adult midgut (Drosophila) and 202 other cell types or tissues"/>
</dbReference>
<dbReference type="ExpressionAtlas" id="P41374">
    <property type="expression patterns" value="baseline and differential"/>
</dbReference>
<dbReference type="GO" id="GO:0005829">
    <property type="term" value="C:cytosol"/>
    <property type="evidence" value="ECO:0000250"/>
    <property type="project" value="FlyBase"/>
</dbReference>
<dbReference type="GO" id="GO:0033290">
    <property type="term" value="C:eukaryotic 48S preinitiation complex"/>
    <property type="evidence" value="ECO:0000318"/>
    <property type="project" value="GO_Central"/>
</dbReference>
<dbReference type="GO" id="GO:0005850">
    <property type="term" value="C:eukaryotic translation initiation factor 2 complex"/>
    <property type="evidence" value="ECO:0000250"/>
    <property type="project" value="UniProtKB"/>
</dbReference>
<dbReference type="GO" id="GO:0005851">
    <property type="term" value="C:eukaryotic translation initiation factor 2B complex"/>
    <property type="evidence" value="ECO:0000250"/>
    <property type="project" value="FlyBase"/>
</dbReference>
<dbReference type="GO" id="GO:0043022">
    <property type="term" value="F:ribosome binding"/>
    <property type="evidence" value="ECO:0000318"/>
    <property type="project" value="GO_Central"/>
</dbReference>
<dbReference type="GO" id="GO:0003723">
    <property type="term" value="F:RNA binding"/>
    <property type="evidence" value="ECO:0007669"/>
    <property type="project" value="UniProtKB-KW"/>
</dbReference>
<dbReference type="GO" id="GO:0003743">
    <property type="term" value="F:translation initiation factor activity"/>
    <property type="evidence" value="ECO:0000316"/>
    <property type="project" value="FlyBase"/>
</dbReference>
<dbReference type="GO" id="GO:0006413">
    <property type="term" value="P:translational initiation"/>
    <property type="evidence" value="ECO:0000250"/>
    <property type="project" value="FlyBase"/>
</dbReference>
<dbReference type="CDD" id="cd04452">
    <property type="entry name" value="S1_IF2_alpha"/>
    <property type="match status" value="1"/>
</dbReference>
<dbReference type="FunFam" id="1.10.150.190:FF:000001">
    <property type="entry name" value="Eukaryotic translation initiation factor 2 subunit 1"/>
    <property type="match status" value="1"/>
</dbReference>
<dbReference type="FunFam" id="2.40.50.140:FF:000795">
    <property type="entry name" value="Eukaryotic translation initiation factor 2 subunit 1"/>
    <property type="match status" value="1"/>
</dbReference>
<dbReference type="FunFam" id="3.30.70.1130:FF:000001">
    <property type="entry name" value="Eukaryotic translation initiation factor 2 subunit 1"/>
    <property type="match status" value="1"/>
</dbReference>
<dbReference type="Gene3D" id="3.30.70.1130">
    <property type="entry name" value="EIF_2_alpha"/>
    <property type="match status" value="1"/>
</dbReference>
<dbReference type="Gene3D" id="2.40.50.140">
    <property type="entry name" value="Nucleic acid-binding proteins"/>
    <property type="match status" value="1"/>
</dbReference>
<dbReference type="Gene3D" id="1.10.150.190">
    <property type="entry name" value="Translation initiation factor 2, subunit 1, domain 2"/>
    <property type="match status" value="1"/>
</dbReference>
<dbReference type="InterPro" id="IPR012340">
    <property type="entry name" value="NA-bd_OB-fold"/>
</dbReference>
<dbReference type="InterPro" id="IPR003029">
    <property type="entry name" value="S1_domain"/>
</dbReference>
<dbReference type="InterPro" id="IPR044126">
    <property type="entry name" value="S1_IF2_alpha"/>
</dbReference>
<dbReference type="InterPro" id="IPR024055">
    <property type="entry name" value="TIF2_asu_C"/>
</dbReference>
<dbReference type="InterPro" id="IPR024054">
    <property type="entry name" value="TIF2_asu_middle_sf"/>
</dbReference>
<dbReference type="InterPro" id="IPR011488">
    <property type="entry name" value="TIF_2_asu"/>
</dbReference>
<dbReference type="PANTHER" id="PTHR10602">
    <property type="entry name" value="EUKARYOTIC TRANSLATION INITIATION FACTOR 2 SUBUNIT 1"/>
    <property type="match status" value="1"/>
</dbReference>
<dbReference type="PANTHER" id="PTHR10602:SF0">
    <property type="entry name" value="EUKARYOTIC TRANSLATION INITIATION FACTOR 2 SUBUNIT 1"/>
    <property type="match status" value="1"/>
</dbReference>
<dbReference type="Pfam" id="PF07541">
    <property type="entry name" value="EIF_2_alpha"/>
    <property type="match status" value="1"/>
</dbReference>
<dbReference type="Pfam" id="PF00575">
    <property type="entry name" value="S1"/>
    <property type="match status" value="1"/>
</dbReference>
<dbReference type="SMART" id="SM00316">
    <property type="entry name" value="S1"/>
    <property type="match status" value="1"/>
</dbReference>
<dbReference type="SUPFAM" id="SSF110993">
    <property type="entry name" value="eIF-2-alpha, C-terminal domain"/>
    <property type="match status" value="1"/>
</dbReference>
<dbReference type="SUPFAM" id="SSF116742">
    <property type="entry name" value="eIF2alpha middle domain-like"/>
    <property type="match status" value="1"/>
</dbReference>
<dbReference type="SUPFAM" id="SSF50249">
    <property type="entry name" value="Nucleic acid-binding proteins"/>
    <property type="match status" value="1"/>
</dbReference>
<dbReference type="PROSITE" id="PS50126">
    <property type="entry name" value="S1"/>
    <property type="match status" value="1"/>
</dbReference>
<keyword id="KW-0963">Cytoplasm</keyword>
<keyword id="KW-0396">Initiation factor</keyword>
<keyword id="KW-0597">Phosphoprotein</keyword>
<keyword id="KW-0648">Protein biosynthesis</keyword>
<keyword id="KW-1185">Reference proteome</keyword>
<keyword id="KW-0694">RNA-binding</keyword>
<feature type="chain" id="PRO_0000137387" description="Eukaryotic translation initiation factor 2 subunit 1">
    <location>
        <begin position="1"/>
        <end position="341"/>
    </location>
</feature>
<feature type="domain" description="S1 motif" evidence="4">
    <location>
        <begin position="16"/>
        <end position="87"/>
    </location>
</feature>
<feature type="region of interest" description="Disordered" evidence="5">
    <location>
        <begin position="293"/>
        <end position="341"/>
    </location>
</feature>
<feature type="compositionally biased region" description="Acidic residues" evidence="5">
    <location>
        <begin position="300"/>
        <end position="309"/>
    </location>
</feature>
<feature type="modified residue" description="Phosphoserine" evidence="1">
    <location>
        <position position="51"/>
    </location>
</feature>
<sequence length="341" mass="38646">MALTSRFYNERYPEIEDVVMVNVLSIAEMGAYVHLLEYNNIEGMILLSELSRRRIRSINKLIRVGKTEPVVVIRVDKEKGYIDLSKRRVSPEDVEKCTERFAKAKAINSLLRHVADILGFEGNEKLEDLYQKTAWHFEKKYNNKTVAYDIFKQSVTDPTVFDECNLEPETKEVLLSNIKRKLVSPTVKIRADIECSCYGYEGIDAVKASLTKGLELSTEELPIRINLIAPPLYVMTTSTTKKTDGLKALEVAIEHIRAKTSEYDGEFKVIMAPKLVTAIDEADLARRLERAEAENAQVAGDDDEEDGADQEGMQFDPEKEFNHKGSGAGRANEEDEEEEED</sequence>
<protein>
    <recommendedName>
        <fullName>Eukaryotic translation initiation factor 2 subunit 1</fullName>
    </recommendedName>
    <alternativeName>
        <fullName>Eukaryotic translation initiation factor 2 subunit alpha</fullName>
        <shortName>eIF-2-alpha</shortName>
        <shortName>eIF-2A</shortName>
        <shortName>eIF-2alpha</shortName>
        <shortName>eIF2-alpha</shortName>
    </alternativeName>
</protein>
<name>IF2A_DROME</name>
<reference key="1">
    <citation type="journal article" date="1994" name="Gene">
        <title>Isolation and characterization of the Drosophila melanogaster eIF-2 alpha gene encoding the alpha subunit of translation initiation factor eIF-2.</title>
        <authorList>
            <person name="Qu S."/>
            <person name="Cavener D.R."/>
        </authorList>
    </citation>
    <scope>NUCLEOTIDE SEQUENCE [MRNA]</scope>
    <source>
        <strain>Oregon-R</strain>
        <tissue>Embryo</tissue>
    </source>
</reference>
<reference key="2">
    <citation type="journal article" date="2000" name="Science">
        <title>The genome sequence of Drosophila melanogaster.</title>
        <authorList>
            <person name="Adams M.D."/>
            <person name="Celniker S.E."/>
            <person name="Holt R.A."/>
            <person name="Evans C.A."/>
            <person name="Gocayne J.D."/>
            <person name="Amanatides P.G."/>
            <person name="Scherer S.E."/>
            <person name="Li P.W."/>
            <person name="Hoskins R.A."/>
            <person name="Galle R.F."/>
            <person name="George R.A."/>
            <person name="Lewis S.E."/>
            <person name="Richards S."/>
            <person name="Ashburner M."/>
            <person name="Henderson S.N."/>
            <person name="Sutton G.G."/>
            <person name="Wortman J.R."/>
            <person name="Yandell M.D."/>
            <person name="Zhang Q."/>
            <person name="Chen L.X."/>
            <person name="Brandon R.C."/>
            <person name="Rogers Y.-H.C."/>
            <person name="Blazej R.G."/>
            <person name="Champe M."/>
            <person name="Pfeiffer B.D."/>
            <person name="Wan K.H."/>
            <person name="Doyle C."/>
            <person name="Baxter E.G."/>
            <person name="Helt G."/>
            <person name="Nelson C.R."/>
            <person name="Miklos G.L.G."/>
            <person name="Abril J.F."/>
            <person name="Agbayani A."/>
            <person name="An H.-J."/>
            <person name="Andrews-Pfannkoch C."/>
            <person name="Baldwin D."/>
            <person name="Ballew R.M."/>
            <person name="Basu A."/>
            <person name="Baxendale J."/>
            <person name="Bayraktaroglu L."/>
            <person name="Beasley E.M."/>
            <person name="Beeson K.Y."/>
            <person name="Benos P.V."/>
            <person name="Berman B.P."/>
            <person name="Bhandari D."/>
            <person name="Bolshakov S."/>
            <person name="Borkova D."/>
            <person name="Botchan M.R."/>
            <person name="Bouck J."/>
            <person name="Brokstein P."/>
            <person name="Brottier P."/>
            <person name="Burtis K.C."/>
            <person name="Busam D.A."/>
            <person name="Butler H."/>
            <person name="Cadieu E."/>
            <person name="Center A."/>
            <person name="Chandra I."/>
            <person name="Cherry J.M."/>
            <person name="Cawley S."/>
            <person name="Dahlke C."/>
            <person name="Davenport L.B."/>
            <person name="Davies P."/>
            <person name="de Pablos B."/>
            <person name="Delcher A."/>
            <person name="Deng Z."/>
            <person name="Mays A.D."/>
            <person name="Dew I."/>
            <person name="Dietz S.M."/>
            <person name="Dodson K."/>
            <person name="Doup L.E."/>
            <person name="Downes M."/>
            <person name="Dugan-Rocha S."/>
            <person name="Dunkov B.C."/>
            <person name="Dunn P."/>
            <person name="Durbin K.J."/>
            <person name="Evangelista C.C."/>
            <person name="Ferraz C."/>
            <person name="Ferriera S."/>
            <person name="Fleischmann W."/>
            <person name="Fosler C."/>
            <person name="Gabrielian A.E."/>
            <person name="Garg N.S."/>
            <person name="Gelbart W.M."/>
            <person name="Glasser K."/>
            <person name="Glodek A."/>
            <person name="Gong F."/>
            <person name="Gorrell J.H."/>
            <person name="Gu Z."/>
            <person name="Guan P."/>
            <person name="Harris M."/>
            <person name="Harris N.L."/>
            <person name="Harvey D.A."/>
            <person name="Heiman T.J."/>
            <person name="Hernandez J.R."/>
            <person name="Houck J."/>
            <person name="Hostin D."/>
            <person name="Houston K.A."/>
            <person name="Howland T.J."/>
            <person name="Wei M.-H."/>
            <person name="Ibegwam C."/>
            <person name="Jalali M."/>
            <person name="Kalush F."/>
            <person name="Karpen G.H."/>
            <person name="Ke Z."/>
            <person name="Kennison J.A."/>
            <person name="Ketchum K.A."/>
            <person name="Kimmel B.E."/>
            <person name="Kodira C.D."/>
            <person name="Kraft C.L."/>
            <person name="Kravitz S."/>
            <person name="Kulp D."/>
            <person name="Lai Z."/>
            <person name="Lasko P."/>
            <person name="Lei Y."/>
            <person name="Levitsky A.A."/>
            <person name="Li J.H."/>
            <person name="Li Z."/>
            <person name="Liang Y."/>
            <person name="Lin X."/>
            <person name="Liu X."/>
            <person name="Mattei B."/>
            <person name="McIntosh T.C."/>
            <person name="McLeod M.P."/>
            <person name="McPherson D."/>
            <person name="Merkulov G."/>
            <person name="Milshina N.V."/>
            <person name="Mobarry C."/>
            <person name="Morris J."/>
            <person name="Moshrefi A."/>
            <person name="Mount S.M."/>
            <person name="Moy M."/>
            <person name="Murphy B."/>
            <person name="Murphy L."/>
            <person name="Muzny D.M."/>
            <person name="Nelson D.L."/>
            <person name="Nelson D.R."/>
            <person name="Nelson K.A."/>
            <person name="Nixon K."/>
            <person name="Nusskern D.R."/>
            <person name="Pacleb J.M."/>
            <person name="Palazzolo M."/>
            <person name="Pittman G.S."/>
            <person name="Pan S."/>
            <person name="Pollard J."/>
            <person name="Puri V."/>
            <person name="Reese M.G."/>
            <person name="Reinert K."/>
            <person name="Remington K."/>
            <person name="Saunders R.D.C."/>
            <person name="Scheeler F."/>
            <person name="Shen H."/>
            <person name="Shue B.C."/>
            <person name="Siden-Kiamos I."/>
            <person name="Simpson M."/>
            <person name="Skupski M.P."/>
            <person name="Smith T.J."/>
            <person name="Spier E."/>
            <person name="Spradling A.C."/>
            <person name="Stapleton M."/>
            <person name="Strong R."/>
            <person name="Sun E."/>
            <person name="Svirskas R."/>
            <person name="Tector C."/>
            <person name="Turner R."/>
            <person name="Venter E."/>
            <person name="Wang A.H."/>
            <person name="Wang X."/>
            <person name="Wang Z.-Y."/>
            <person name="Wassarman D.A."/>
            <person name="Weinstock G.M."/>
            <person name="Weissenbach J."/>
            <person name="Williams S.M."/>
            <person name="Woodage T."/>
            <person name="Worley K.C."/>
            <person name="Wu D."/>
            <person name="Yang S."/>
            <person name="Yao Q.A."/>
            <person name="Ye J."/>
            <person name="Yeh R.-F."/>
            <person name="Zaveri J.S."/>
            <person name="Zhan M."/>
            <person name="Zhang G."/>
            <person name="Zhao Q."/>
            <person name="Zheng L."/>
            <person name="Zheng X.H."/>
            <person name="Zhong F.N."/>
            <person name="Zhong W."/>
            <person name="Zhou X."/>
            <person name="Zhu S.C."/>
            <person name="Zhu X."/>
            <person name="Smith H.O."/>
            <person name="Gibbs R.A."/>
            <person name="Myers E.W."/>
            <person name="Rubin G.M."/>
            <person name="Venter J.C."/>
        </authorList>
    </citation>
    <scope>NUCLEOTIDE SEQUENCE [LARGE SCALE GENOMIC DNA]</scope>
    <source>
        <strain>Berkeley</strain>
    </source>
</reference>
<reference key="3">
    <citation type="journal article" date="2002" name="Genome Biol.">
        <title>Annotation of the Drosophila melanogaster euchromatic genome: a systematic review.</title>
        <authorList>
            <person name="Misra S."/>
            <person name="Crosby M.A."/>
            <person name="Mungall C.J."/>
            <person name="Matthews B.B."/>
            <person name="Campbell K.S."/>
            <person name="Hradecky P."/>
            <person name="Huang Y."/>
            <person name="Kaminker J.S."/>
            <person name="Millburn G.H."/>
            <person name="Prochnik S.E."/>
            <person name="Smith C.D."/>
            <person name="Tupy J.L."/>
            <person name="Whitfield E.J."/>
            <person name="Bayraktaroglu L."/>
            <person name="Berman B.P."/>
            <person name="Bettencourt B.R."/>
            <person name="Celniker S.E."/>
            <person name="de Grey A.D.N.J."/>
            <person name="Drysdale R.A."/>
            <person name="Harris N.L."/>
            <person name="Richter J."/>
            <person name="Russo S."/>
            <person name="Schroeder A.J."/>
            <person name="Shu S.Q."/>
            <person name="Stapleton M."/>
            <person name="Yamada C."/>
            <person name="Ashburner M."/>
            <person name="Gelbart W.M."/>
            <person name="Rubin G.M."/>
            <person name="Lewis S.E."/>
        </authorList>
    </citation>
    <scope>GENOME REANNOTATION</scope>
    <source>
        <strain>Berkeley</strain>
    </source>
</reference>
<reference key="4">
    <citation type="journal article" date="2002" name="Genome Biol.">
        <title>A Drosophila full-length cDNA resource.</title>
        <authorList>
            <person name="Stapleton M."/>
            <person name="Carlson J.W."/>
            <person name="Brokstein P."/>
            <person name="Yu C."/>
            <person name="Champe M."/>
            <person name="George R.A."/>
            <person name="Guarin H."/>
            <person name="Kronmiller B."/>
            <person name="Pacleb J.M."/>
            <person name="Park S."/>
            <person name="Wan K.H."/>
            <person name="Rubin G.M."/>
            <person name="Celniker S.E."/>
        </authorList>
    </citation>
    <scope>NUCLEOTIDE SEQUENCE [LARGE SCALE MRNA]</scope>
    <source>
        <strain>Berkeley</strain>
        <tissue>Head</tissue>
    </source>
</reference>
<accession>P41374</accession>
<accession>Q9V3G2</accession>
<evidence type="ECO:0000250" key="1"/>
<evidence type="ECO:0000250" key="2">
    <source>
        <dbReference type="UniProtKB" id="P20459"/>
    </source>
</evidence>
<evidence type="ECO:0000250" key="3">
    <source>
        <dbReference type="UniProtKB" id="P56286"/>
    </source>
</evidence>
<evidence type="ECO:0000255" key="4">
    <source>
        <dbReference type="PROSITE-ProRule" id="PRU00180"/>
    </source>
</evidence>
<evidence type="ECO:0000256" key="5">
    <source>
        <dbReference type="SAM" id="MobiDB-lite"/>
    </source>
</evidence>
<evidence type="ECO:0000305" key="6"/>
<evidence type="ECO:0000312" key="7">
    <source>
        <dbReference type="FlyBase" id="FBgn0290109"/>
    </source>
</evidence>